<feature type="chain" id="PRO_1000069833" description="4-hydroxybenzoate octaprenyltransferase">
    <location>
        <begin position="1"/>
        <end position="287"/>
    </location>
</feature>
<feature type="transmembrane region" description="Helical" evidence="1">
    <location>
        <begin position="22"/>
        <end position="42"/>
    </location>
</feature>
<feature type="transmembrane region" description="Helical" evidence="1">
    <location>
        <begin position="45"/>
        <end position="65"/>
    </location>
</feature>
<feature type="transmembrane region" description="Helical" evidence="1">
    <location>
        <begin position="91"/>
        <end position="111"/>
    </location>
</feature>
<feature type="transmembrane region" description="Helical" evidence="1">
    <location>
        <begin position="114"/>
        <end position="134"/>
    </location>
</feature>
<feature type="transmembrane region" description="Helical" evidence="1">
    <location>
        <begin position="139"/>
        <end position="159"/>
    </location>
</feature>
<feature type="transmembrane region" description="Helical" evidence="1">
    <location>
        <begin position="161"/>
        <end position="181"/>
    </location>
</feature>
<feature type="transmembrane region" description="Helical" evidence="1">
    <location>
        <begin position="212"/>
        <end position="232"/>
    </location>
</feature>
<feature type="transmembrane region" description="Helical" evidence="1">
    <location>
        <begin position="236"/>
        <end position="256"/>
    </location>
</feature>
<feature type="transmembrane region" description="Helical" evidence="1">
    <location>
        <begin position="267"/>
        <end position="287"/>
    </location>
</feature>
<proteinExistence type="inferred from homology"/>
<sequence length="287" mass="32276">MNFFCKEKRQAYVELMRINKPIGTLLLLWPTLWALWIAAQGFPDLGVLIVFSAGVFLMRSAGCVINDFADRNIDGFVERTKHRPLPSGRATSTEAIILFFILAIVSFLLVLTQNSLTIQLSFAGLLLAFAYPFMKRFTQLPQLVLGLAFSWSIPMAFAAQANALPAVVWIIFAVNIIWTIAYDTLYAMVDREDDLKIGVKSTAILFASNDKIIIALLQLTSLILLSLLGWLEDLNWIYFIALLVVGGLFLRQQLQIKNREKTACFKAFLDNNYVGFVIFAGLFLGYL</sequence>
<keyword id="KW-0997">Cell inner membrane</keyword>
<keyword id="KW-1003">Cell membrane</keyword>
<keyword id="KW-0460">Magnesium</keyword>
<keyword id="KW-0472">Membrane</keyword>
<keyword id="KW-1185">Reference proteome</keyword>
<keyword id="KW-0808">Transferase</keyword>
<keyword id="KW-0812">Transmembrane</keyword>
<keyword id="KW-1133">Transmembrane helix</keyword>
<keyword id="KW-0831">Ubiquinone biosynthesis</keyword>
<name>UBIA_PSYIN</name>
<dbReference type="EC" id="2.5.1.39" evidence="1"/>
<dbReference type="EMBL" id="CP000510">
    <property type="protein sequence ID" value="ABM05152.1"/>
    <property type="molecule type" value="Genomic_DNA"/>
</dbReference>
<dbReference type="RefSeq" id="WP_011771704.1">
    <property type="nucleotide sequence ID" value="NC_008709.1"/>
</dbReference>
<dbReference type="SMR" id="A1T087"/>
<dbReference type="STRING" id="357804.Ping_3469"/>
<dbReference type="KEGG" id="pin:Ping_3469"/>
<dbReference type="eggNOG" id="COG0382">
    <property type="taxonomic scope" value="Bacteria"/>
</dbReference>
<dbReference type="HOGENOM" id="CLU_034879_1_0_6"/>
<dbReference type="OrthoDB" id="9782418at2"/>
<dbReference type="UniPathway" id="UPA00232"/>
<dbReference type="Proteomes" id="UP000000639">
    <property type="component" value="Chromosome"/>
</dbReference>
<dbReference type="GO" id="GO:0005886">
    <property type="term" value="C:plasma membrane"/>
    <property type="evidence" value="ECO:0007669"/>
    <property type="project" value="UniProtKB-SubCell"/>
</dbReference>
<dbReference type="GO" id="GO:0008412">
    <property type="term" value="F:4-hydroxybenzoate polyprenyltransferase activity"/>
    <property type="evidence" value="ECO:0007669"/>
    <property type="project" value="UniProtKB-UniRule"/>
</dbReference>
<dbReference type="GO" id="GO:0006744">
    <property type="term" value="P:ubiquinone biosynthetic process"/>
    <property type="evidence" value="ECO:0007669"/>
    <property type="project" value="UniProtKB-UniRule"/>
</dbReference>
<dbReference type="CDD" id="cd13959">
    <property type="entry name" value="PT_UbiA_COQ2"/>
    <property type="match status" value="1"/>
</dbReference>
<dbReference type="FunFam" id="1.10.357.140:FF:000002">
    <property type="entry name" value="4-hydroxybenzoate octaprenyltransferase"/>
    <property type="match status" value="1"/>
</dbReference>
<dbReference type="FunFam" id="1.20.120.1780:FF:000001">
    <property type="entry name" value="4-hydroxybenzoate octaprenyltransferase"/>
    <property type="match status" value="1"/>
</dbReference>
<dbReference type="Gene3D" id="1.10.357.140">
    <property type="entry name" value="UbiA prenyltransferase"/>
    <property type="match status" value="1"/>
</dbReference>
<dbReference type="Gene3D" id="1.20.120.1780">
    <property type="entry name" value="UbiA prenyltransferase"/>
    <property type="match status" value="1"/>
</dbReference>
<dbReference type="HAMAP" id="MF_01635">
    <property type="entry name" value="UbiA"/>
    <property type="match status" value="1"/>
</dbReference>
<dbReference type="InterPro" id="IPR006370">
    <property type="entry name" value="HB_polyprenyltransferase-like"/>
</dbReference>
<dbReference type="InterPro" id="IPR039653">
    <property type="entry name" value="Prenyltransferase"/>
</dbReference>
<dbReference type="InterPro" id="IPR000537">
    <property type="entry name" value="UbiA_prenyltransferase"/>
</dbReference>
<dbReference type="InterPro" id="IPR030470">
    <property type="entry name" value="UbiA_prenylTrfase_CS"/>
</dbReference>
<dbReference type="InterPro" id="IPR044878">
    <property type="entry name" value="UbiA_sf"/>
</dbReference>
<dbReference type="NCBIfam" id="TIGR01474">
    <property type="entry name" value="ubiA_proteo"/>
    <property type="match status" value="1"/>
</dbReference>
<dbReference type="PANTHER" id="PTHR11048:SF28">
    <property type="entry name" value="4-HYDROXYBENZOATE POLYPRENYLTRANSFERASE, MITOCHONDRIAL"/>
    <property type="match status" value="1"/>
</dbReference>
<dbReference type="PANTHER" id="PTHR11048">
    <property type="entry name" value="PRENYLTRANSFERASES"/>
    <property type="match status" value="1"/>
</dbReference>
<dbReference type="Pfam" id="PF01040">
    <property type="entry name" value="UbiA"/>
    <property type="match status" value="1"/>
</dbReference>
<dbReference type="PROSITE" id="PS00943">
    <property type="entry name" value="UBIA"/>
    <property type="match status" value="1"/>
</dbReference>
<organism>
    <name type="scientific">Psychromonas ingrahamii (strain DSM 17664 / CCUG 51855 / 37)</name>
    <dbReference type="NCBI Taxonomy" id="357804"/>
    <lineage>
        <taxon>Bacteria</taxon>
        <taxon>Pseudomonadati</taxon>
        <taxon>Pseudomonadota</taxon>
        <taxon>Gammaproteobacteria</taxon>
        <taxon>Alteromonadales</taxon>
        <taxon>Psychromonadaceae</taxon>
        <taxon>Psychromonas</taxon>
    </lineage>
</organism>
<accession>A1T087</accession>
<reference key="1">
    <citation type="journal article" date="2008" name="BMC Genomics">
        <title>Genomics of an extreme psychrophile, Psychromonas ingrahamii.</title>
        <authorList>
            <person name="Riley M."/>
            <person name="Staley J.T."/>
            <person name="Danchin A."/>
            <person name="Wang T.Z."/>
            <person name="Brettin T.S."/>
            <person name="Hauser L.J."/>
            <person name="Land M.L."/>
            <person name="Thompson L.S."/>
        </authorList>
    </citation>
    <scope>NUCLEOTIDE SEQUENCE [LARGE SCALE GENOMIC DNA]</scope>
    <source>
        <strain>DSM 17664 / CCUG 51855 / 37</strain>
    </source>
</reference>
<protein>
    <recommendedName>
        <fullName evidence="1">4-hydroxybenzoate octaprenyltransferase</fullName>
        <ecNumber evidence="1">2.5.1.39</ecNumber>
    </recommendedName>
    <alternativeName>
        <fullName evidence="1">4-HB polyprenyltransferase</fullName>
    </alternativeName>
</protein>
<comment type="function">
    <text evidence="1">Catalyzes the prenylation of para-hydroxybenzoate (PHB) with an all-trans polyprenyl group. Mediates the second step in the final reaction sequence of ubiquinone-8 (UQ-8) biosynthesis, which is the condensation of the polyisoprenoid side chain with PHB, generating the first membrane-bound Q intermediate 3-octaprenyl-4-hydroxybenzoate.</text>
</comment>
<comment type="catalytic activity">
    <reaction evidence="1">
        <text>all-trans-octaprenyl diphosphate + 4-hydroxybenzoate = 4-hydroxy-3-(all-trans-octaprenyl)benzoate + diphosphate</text>
        <dbReference type="Rhea" id="RHEA:27782"/>
        <dbReference type="ChEBI" id="CHEBI:1617"/>
        <dbReference type="ChEBI" id="CHEBI:17879"/>
        <dbReference type="ChEBI" id="CHEBI:33019"/>
        <dbReference type="ChEBI" id="CHEBI:57711"/>
        <dbReference type="EC" id="2.5.1.39"/>
    </reaction>
</comment>
<comment type="cofactor">
    <cofactor evidence="1">
        <name>Mg(2+)</name>
        <dbReference type="ChEBI" id="CHEBI:18420"/>
    </cofactor>
</comment>
<comment type="pathway">
    <text evidence="1">Cofactor biosynthesis; ubiquinone biosynthesis.</text>
</comment>
<comment type="subcellular location">
    <subcellularLocation>
        <location evidence="1">Cell inner membrane</location>
        <topology evidence="1">Multi-pass membrane protein</topology>
    </subcellularLocation>
</comment>
<comment type="similarity">
    <text evidence="1">Belongs to the UbiA prenyltransferase family.</text>
</comment>
<gene>
    <name evidence="1" type="primary">ubiA</name>
    <name type="ordered locus">Ping_3469</name>
</gene>
<evidence type="ECO:0000255" key="1">
    <source>
        <dbReference type="HAMAP-Rule" id="MF_01635"/>
    </source>
</evidence>